<comment type="function">
    <text evidence="1">Required for maturation of urease via the functional incorporation of the urease nickel metallocenter.</text>
</comment>
<comment type="function">
    <text evidence="2">Expression of the urease operon increases the likelihood of bacterial survival by contributing to acid resistance in vitro and in vivo in BALB/c mice. Y.enterocolitica enters the body via an oral path and must survive the acidic stomach before being able to colonize the intestinal mucosa (PubMed:7558281).</text>
</comment>
<comment type="subunit">
    <text evidence="1">UreD, UreF and UreG form a complex that acts as a GTP-hydrolysis-dependent molecular chaperone, activating the urease apoprotein by helping to assemble the nickel containing metallocenter of UreC. The UreE protein probably delivers the nickel.</text>
</comment>
<comment type="subcellular location">
    <subcellularLocation>
        <location evidence="1">Cytoplasm</location>
    </subcellularLocation>
</comment>
<comment type="similarity">
    <text evidence="1">Belongs to the UreD family.</text>
</comment>
<sequence length="325" mass="36455">MSEPEYRGNSFTGSRHALGINAPELAQYQDEPAQMRRRGVGKSGYLKLRFAKREHRSILAEMERRVPSMVQKALYWDEEMPELPCVTMISTSGCILQGDRLATDVIVEAGACAHVTTQSATKVHMMNANYASQIQNFTVEEGGYLEFMPDPLIPHRNSRFITDTTINIHPTATAIYSEVLMSGRKYHHADERFGFDVYSSRVAAHVFLGKEQPAGKELFVEKYVLEPKSESLDAIGVMQSFDAFGNVILLTPKEHHERILARVPAHFDIKGGIASGATRLPNDCGLVFKALGIDSAGVKNEIRQFWKIAREEILGVTLPEKFLWR</sequence>
<reference key="1">
    <citation type="journal article" date="1994" name="Gene">
        <title>Characterisation of the urease-encoding gene complex of Yersinia enterocolitica.</title>
        <authorList>
            <person name="de Koning-Ward T.F."/>
            <person name="Ward A.C."/>
            <person name="Robins-Browne R.M."/>
        </authorList>
    </citation>
    <scope>NUCLEOTIDE SEQUENCE [GENOMIC DNA]</scope>
    <source>
        <strain>A2635 / Serotype O:8</strain>
    </source>
</reference>
<reference key="2">
    <citation type="journal article" date="1995" name="Infect. Immun.">
        <title>Contribution of urease to acid tolerance in Yersinia enterocolitica.</title>
        <authorList>
            <person name="de Koning-Ward T.F."/>
            <person name="Robins-Browne R.M."/>
        </authorList>
    </citation>
    <scope>ROLE IN VIRULENCE</scope>
    <source>
        <strain>W22703 / Serogroup O:9</strain>
    </source>
</reference>
<name>URED_YEREN</name>
<dbReference type="EMBL" id="L24101">
    <property type="protein sequence ID" value="AAA51000.1"/>
    <property type="molecule type" value="Genomic_DNA"/>
</dbReference>
<dbReference type="SMR" id="P42868"/>
<dbReference type="GO" id="GO:0005737">
    <property type="term" value="C:cytoplasm"/>
    <property type="evidence" value="ECO:0007669"/>
    <property type="project" value="UniProtKB-SubCell"/>
</dbReference>
<dbReference type="GO" id="GO:0016151">
    <property type="term" value="F:nickel cation binding"/>
    <property type="evidence" value="ECO:0007669"/>
    <property type="project" value="UniProtKB-UniRule"/>
</dbReference>
<dbReference type="HAMAP" id="MF_01384">
    <property type="entry name" value="UreD"/>
    <property type="match status" value="1"/>
</dbReference>
<dbReference type="InterPro" id="IPR002669">
    <property type="entry name" value="UreD"/>
</dbReference>
<dbReference type="PANTHER" id="PTHR33643">
    <property type="entry name" value="UREASE ACCESSORY PROTEIN D"/>
    <property type="match status" value="1"/>
</dbReference>
<dbReference type="PANTHER" id="PTHR33643:SF1">
    <property type="entry name" value="UREASE ACCESSORY PROTEIN D"/>
    <property type="match status" value="1"/>
</dbReference>
<dbReference type="Pfam" id="PF01774">
    <property type="entry name" value="UreD"/>
    <property type="match status" value="1"/>
</dbReference>
<organism>
    <name type="scientific">Yersinia enterocolitica</name>
    <dbReference type="NCBI Taxonomy" id="630"/>
    <lineage>
        <taxon>Bacteria</taxon>
        <taxon>Pseudomonadati</taxon>
        <taxon>Pseudomonadota</taxon>
        <taxon>Gammaproteobacteria</taxon>
        <taxon>Enterobacterales</taxon>
        <taxon>Yersiniaceae</taxon>
        <taxon>Yersinia</taxon>
    </lineage>
</organism>
<feature type="chain" id="PRO_0000067620" description="Urease accessory protein UreD">
    <location>
        <begin position="1"/>
        <end position="325"/>
    </location>
</feature>
<accession>P42868</accession>
<proteinExistence type="inferred from homology"/>
<protein>
    <recommendedName>
        <fullName evidence="1">Urease accessory protein UreD</fullName>
    </recommendedName>
</protein>
<keyword id="KW-0143">Chaperone</keyword>
<keyword id="KW-0963">Cytoplasm</keyword>
<keyword id="KW-0996">Nickel insertion</keyword>
<gene>
    <name evidence="1" type="primary">ureD</name>
</gene>
<evidence type="ECO:0000255" key="1">
    <source>
        <dbReference type="HAMAP-Rule" id="MF_01384"/>
    </source>
</evidence>
<evidence type="ECO:0000269" key="2">
    <source>
    </source>
</evidence>